<reference key="1">
    <citation type="journal article" date="2005" name="Genome Res.">
        <title>Comparative and functional genomic analyses of the pathogenicity of phytopathogen Xanthomonas campestris pv. campestris.</title>
        <authorList>
            <person name="Qian W."/>
            <person name="Jia Y."/>
            <person name="Ren S.-X."/>
            <person name="He Y.-Q."/>
            <person name="Feng J.-X."/>
            <person name="Lu L.-F."/>
            <person name="Sun Q."/>
            <person name="Ying G."/>
            <person name="Tang D.-J."/>
            <person name="Tang H."/>
            <person name="Wu W."/>
            <person name="Hao P."/>
            <person name="Wang L."/>
            <person name="Jiang B.-L."/>
            <person name="Zeng S."/>
            <person name="Gu W.-Y."/>
            <person name="Lu G."/>
            <person name="Rong L."/>
            <person name="Tian Y."/>
            <person name="Yao Z."/>
            <person name="Fu G."/>
            <person name="Chen B."/>
            <person name="Fang R."/>
            <person name="Qiang B."/>
            <person name="Chen Z."/>
            <person name="Zhao G.-P."/>
            <person name="Tang J.-L."/>
            <person name="He C."/>
        </authorList>
    </citation>
    <scope>NUCLEOTIDE SEQUENCE [LARGE SCALE GENOMIC DNA]</scope>
    <source>
        <strain>8004</strain>
    </source>
</reference>
<accession>Q4UNK6</accession>
<sequence length="46" mass="5310">MATKRTFQPSNLKRARDHGFRARMATADGRKILARRRAKGRKRLSA</sequence>
<gene>
    <name evidence="1" type="primary">rpmH</name>
    <name type="ordered locus">XC_4332</name>
</gene>
<feature type="chain" id="PRO_1000013492" description="Large ribosomal subunit protein bL34">
    <location>
        <begin position="1"/>
        <end position="46"/>
    </location>
</feature>
<feature type="region of interest" description="Disordered" evidence="2">
    <location>
        <begin position="1"/>
        <end position="46"/>
    </location>
</feature>
<feature type="compositionally biased region" description="Polar residues" evidence="2">
    <location>
        <begin position="1"/>
        <end position="11"/>
    </location>
</feature>
<feature type="compositionally biased region" description="Basic residues" evidence="2">
    <location>
        <begin position="32"/>
        <end position="46"/>
    </location>
</feature>
<name>RL34_XANC8</name>
<protein>
    <recommendedName>
        <fullName evidence="1">Large ribosomal subunit protein bL34</fullName>
    </recommendedName>
    <alternativeName>
        <fullName evidence="3">50S ribosomal protein L34</fullName>
    </alternativeName>
</protein>
<keyword id="KW-0687">Ribonucleoprotein</keyword>
<keyword id="KW-0689">Ribosomal protein</keyword>
<comment type="similarity">
    <text evidence="1">Belongs to the bacterial ribosomal protein bL34 family.</text>
</comment>
<dbReference type="EMBL" id="CP000050">
    <property type="protein sequence ID" value="AAY51367.1"/>
    <property type="molecule type" value="Genomic_DNA"/>
</dbReference>
<dbReference type="RefSeq" id="WP_002805908.1">
    <property type="nucleotide sequence ID" value="NZ_CP155948.1"/>
</dbReference>
<dbReference type="SMR" id="Q4UNK6"/>
<dbReference type="GeneID" id="97512525"/>
<dbReference type="KEGG" id="xcb:XC_4332"/>
<dbReference type="HOGENOM" id="CLU_129938_2_0_6"/>
<dbReference type="Proteomes" id="UP000000420">
    <property type="component" value="Chromosome"/>
</dbReference>
<dbReference type="GO" id="GO:1990904">
    <property type="term" value="C:ribonucleoprotein complex"/>
    <property type="evidence" value="ECO:0007669"/>
    <property type="project" value="UniProtKB-KW"/>
</dbReference>
<dbReference type="GO" id="GO:0005840">
    <property type="term" value="C:ribosome"/>
    <property type="evidence" value="ECO:0007669"/>
    <property type="project" value="UniProtKB-KW"/>
</dbReference>
<dbReference type="GO" id="GO:0003735">
    <property type="term" value="F:structural constituent of ribosome"/>
    <property type="evidence" value="ECO:0007669"/>
    <property type="project" value="InterPro"/>
</dbReference>
<dbReference type="GO" id="GO:0006412">
    <property type="term" value="P:translation"/>
    <property type="evidence" value="ECO:0007669"/>
    <property type="project" value="UniProtKB-UniRule"/>
</dbReference>
<dbReference type="FunFam" id="1.10.287.3980:FF:000001">
    <property type="entry name" value="Mitochondrial ribosomal protein L34"/>
    <property type="match status" value="1"/>
</dbReference>
<dbReference type="Gene3D" id="1.10.287.3980">
    <property type="match status" value="1"/>
</dbReference>
<dbReference type="HAMAP" id="MF_00391">
    <property type="entry name" value="Ribosomal_bL34"/>
    <property type="match status" value="1"/>
</dbReference>
<dbReference type="InterPro" id="IPR000271">
    <property type="entry name" value="Ribosomal_bL34"/>
</dbReference>
<dbReference type="InterPro" id="IPR020939">
    <property type="entry name" value="Ribosomal_bL34_CS"/>
</dbReference>
<dbReference type="NCBIfam" id="TIGR01030">
    <property type="entry name" value="rpmH_bact"/>
    <property type="match status" value="1"/>
</dbReference>
<dbReference type="PANTHER" id="PTHR14503:SF4">
    <property type="entry name" value="LARGE RIBOSOMAL SUBUNIT PROTEIN BL34M"/>
    <property type="match status" value="1"/>
</dbReference>
<dbReference type="PANTHER" id="PTHR14503">
    <property type="entry name" value="MITOCHONDRIAL RIBOSOMAL PROTEIN 34 FAMILY MEMBER"/>
    <property type="match status" value="1"/>
</dbReference>
<dbReference type="Pfam" id="PF00468">
    <property type="entry name" value="Ribosomal_L34"/>
    <property type="match status" value="1"/>
</dbReference>
<dbReference type="PROSITE" id="PS00784">
    <property type="entry name" value="RIBOSOMAL_L34"/>
    <property type="match status" value="1"/>
</dbReference>
<organism>
    <name type="scientific">Xanthomonas campestris pv. campestris (strain 8004)</name>
    <dbReference type="NCBI Taxonomy" id="314565"/>
    <lineage>
        <taxon>Bacteria</taxon>
        <taxon>Pseudomonadati</taxon>
        <taxon>Pseudomonadota</taxon>
        <taxon>Gammaproteobacteria</taxon>
        <taxon>Lysobacterales</taxon>
        <taxon>Lysobacteraceae</taxon>
        <taxon>Xanthomonas</taxon>
    </lineage>
</organism>
<proteinExistence type="inferred from homology"/>
<evidence type="ECO:0000255" key="1">
    <source>
        <dbReference type="HAMAP-Rule" id="MF_00391"/>
    </source>
</evidence>
<evidence type="ECO:0000256" key="2">
    <source>
        <dbReference type="SAM" id="MobiDB-lite"/>
    </source>
</evidence>
<evidence type="ECO:0000305" key="3"/>